<keyword id="KW-0067">ATP-binding</keyword>
<keyword id="KW-0175">Coiled coil</keyword>
<keyword id="KW-0493">Microtubule</keyword>
<keyword id="KW-0505">Motor protein</keyword>
<keyword id="KW-0547">Nucleotide-binding</keyword>
<keyword id="KW-1185">Reference proteome</keyword>
<name>KN14K_ARATH</name>
<organism>
    <name type="scientific">Arabidopsis thaliana</name>
    <name type="common">Mouse-ear cress</name>
    <dbReference type="NCBI Taxonomy" id="3702"/>
    <lineage>
        <taxon>Eukaryota</taxon>
        <taxon>Viridiplantae</taxon>
        <taxon>Streptophyta</taxon>
        <taxon>Embryophyta</taxon>
        <taxon>Tracheophyta</taxon>
        <taxon>Spermatophyta</taxon>
        <taxon>Magnoliopsida</taxon>
        <taxon>eudicotyledons</taxon>
        <taxon>Gunneridae</taxon>
        <taxon>Pentapetalae</taxon>
        <taxon>rosids</taxon>
        <taxon>malvids</taxon>
        <taxon>Brassicales</taxon>
        <taxon>Brassicaceae</taxon>
        <taxon>Camelineae</taxon>
        <taxon>Arabidopsis</taxon>
    </lineage>
</organism>
<feature type="chain" id="PRO_0000438046" description="Kinesin-like protein KIN-14K">
    <location>
        <begin position="1"/>
        <end position="975"/>
    </location>
</feature>
<feature type="domain" description="Calponin-homology (CH)" evidence="2">
    <location>
        <begin position="40"/>
        <end position="143"/>
    </location>
</feature>
<feature type="domain" description="Kinesin motor" evidence="3">
    <location>
        <begin position="436"/>
        <end position="746"/>
    </location>
</feature>
<feature type="region of interest" description="Disordered" evidence="4">
    <location>
        <begin position="1"/>
        <end position="40"/>
    </location>
</feature>
<feature type="region of interest" description="Disordered" evidence="4">
    <location>
        <begin position="801"/>
        <end position="852"/>
    </location>
</feature>
<feature type="region of interest" description="Disordered" evidence="4">
    <location>
        <begin position="900"/>
        <end position="975"/>
    </location>
</feature>
<feature type="coiled-coil region" evidence="1">
    <location>
        <begin position="289"/>
        <end position="345"/>
    </location>
</feature>
<feature type="coiled-coil region" evidence="1">
    <location>
        <begin position="757"/>
        <end position="788"/>
    </location>
</feature>
<feature type="compositionally biased region" description="Low complexity" evidence="4">
    <location>
        <begin position="17"/>
        <end position="30"/>
    </location>
</feature>
<feature type="compositionally biased region" description="Basic and acidic residues" evidence="4">
    <location>
        <begin position="31"/>
        <end position="40"/>
    </location>
</feature>
<feature type="compositionally biased region" description="Low complexity" evidence="4">
    <location>
        <begin position="944"/>
        <end position="958"/>
    </location>
</feature>
<feature type="binding site" evidence="3">
    <location>
        <begin position="520"/>
        <end position="527"/>
    </location>
    <ligand>
        <name>ATP</name>
        <dbReference type="ChEBI" id="CHEBI:30616"/>
    </ligand>
</feature>
<reference key="1">
    <citation type="journal article" date="2000" name="DNA Res.">
        <title>Structural analysis of Arabidopsis thaliana chromosome 5. X. Sequence features of the regions of 3,076,755 bp covered by sixty P1 and TAC clones.</title>
        <authorList>
            <person name="Sato S."/>
            <person name="Nakamura Y."/>
            <person name="Kaneko T."/>
            <person name="Katoh T."/>
            <person name="Asamizu E."/>
            <person name="Kotani H."/>
            <person name="Tabata S."/>
        </authorList>
    </citation>
    <scope>NUCLEOTIDE SEQUENCE [LARGE SCALE GENOMIC DNA]</scope>
    <source>
        <strain>cv. Columbia</strain>
    </source>
</reference>
<reference key="2">
    <citation type="journal article" date="1997" name="DNA Res.">
        <title>Structural analysis of Arabidopsis thaliana chromosome 5. II. Sequence features of the regions of 1,044,062 bp covered by thirteen physically assigned P1 clones.</title>
        <authorList>
            <person name="Kotani H."/>
            <person name="Nakamura Y."/>
            <person name="Sato S."/>
            <person name="Kaneko T."/>
            <person name="Asamizu E."/>
            <person name="Miyajima N."/>
            <person name="Tabata S."/>
        </authorList>
    </citation>
    <scope>NUCLEOTIDE SEQUENCE [LARGE SCALE GENOMIC DNA]</scope>
    <source>
        <strain>cv. Columbia</strain>
    </source>
</reference>
<reference key="3">
    <citation type="journal article" date="2017" name="Plant J.">
        <title>Araport11: a complete reannotation of the Arabidopsis thaliana reference genome.</title>
        <authorList>
            <person name="Cheng C.Y."/>
            <person name="Krishnakumar V."/>
            <person name="Chan A.P."/>
            <person name="Thibaud-Nissen F."/>
            <person name="Schobel S."/>
            <person name="Town C.D."/>
        </authorList>
    </citation>
    <scope>GENOME REANNOTATION</scope>
    <source>
        <strain>cv. Columbia</strain>
    </source>
</reference>
<reference key="4">
    <citation type="journal article" date="2001" name="BMC Genomics">
        <title>Kinesins in the Arabidopsis genome: a comparative analysis among eukaryotes.</title>
        <authorList>
            <person name="Reddy A.S."/>
            <person name="Day I.S."/>
        </authorList>
    </citation>
    <scope>GENE FAMILY</scope>
</reference>
<reference key="5">
    <citation type="journal article" date="2006" name="BMC Genomics">
        <title>Comprehensive comparative analysis of kinesins in photosynthetic eukaryotes.</title>
        <authorList>
            <person name="Richardson D.N."/>
            <person name="Simmons M.P."/>
            <person name="Reddy A.S."/>
        </authorList>
    </citation>
    <scope>GENE FAMILY</scope>
    <scope>NOMENCLATURE</scope>
</reference>
<reference key="6">
    <citation type="journal article" date="2012" name="Protoplasma">
        <title>Functions of the Arabidopsis kinesin superfamily of microtubule-based motor proteins.</title>
        <authorList>
            <person name="Zhu C."/>
            <person name="Dixit R."/>
        </authorList>
    </citation>
    <scope>REVIEW</scope>
</reference>
<proteinExistence type="inferred from homology"/>
<protein>
    <recommendedName>
        <fullName evidence="6">Kinesin-like protein KIN-14K</fullName>
    </recommendedName>
</protein>
<comment type="similarity">
    <text evidence="5">Belongs to the TRAFAC class myosin-kinesin ATPase superfamily. Kinesin family. KIN-14 subfamily.</text>
</comment>
<comment type="sequence caution" evidence="6">
    <conflict type="erroneous gene model prediction">
        <sequence resource="EMBL-CDS" id="AED94663"/>
    </conflict>
</comment>
<comment type="sequence caution" evidence="6">
    <conflict type="erroneous gene model prediction">
        <sequence resource="EMBL-CDS" id="BAB11107"/>
    </conflict>
</comment>
<evidence type="ECO:0000255" key="1"/>
<evidence type="ECO:0000255" key="2">
    <source>
        <dbReference type="PROSITE-ProRule" id="PRU00044"/>
    </source>
</evidence>
<evidence type="ECO:0000255" key="3">
    <source>
        <dbReference type="PROSITE-ProRule" id="PRU00283"/>
    </source>
</evidence>
<evidence type="ECO:0000256" key="4">
    <source>
        <dbReference type="SAM" id="MobiDB-lite"/>
    </source>
</evidence>
<evidence type="ECO:0000303" key="5">
    <source>
    </source>
</evidence>
<evidence type="ECO:0000305" key="6"/>
<evidence type="ECO:0000312" key="7">
    <source>
        <dbReference type="Araport" id="AT5G41310"/>
    </source>
</evidence>
<evidence type="ECO:0000312" key="8">
    <source>
        <dbReference type="EMBL" id="BAB11107.1"/>
    </source>
</evidence>
<dbReference type="EMBL" id="AB019225">
    <property type="protein sequence ID" value="BAB11107.1"/>
    <property type="status" value="ALT_SEQ"/>
    <property type="molecule type" value="Genomic_DNA"/>
</dbReference>
<dbReference type="EMBL" id="AB006707">
    <property type="protein sequence ID" value="BAB11107.1"/>
    <property type="status" value="JOINED"/>
    <property type="molecule type" value="Genomic_DNA"/>
</dbReference>
<dbReference type="EMBL" id="CP002688">
    <property type="protein sequence ID" value="AED94663.1"/>
    <property type="status" value="ALT_SEQ"/>
    <property type="molecule type" value="Genomic_DNA"/>
</dbReference>
<dbReference type="RefSeq" id="NP_198947.1">
    <property type="nucleotide sequence ID" value="NM_123496.2"/>
</dbReference>
<dbReference type="SMR" id="F4JX00"/>
<dbReference type="FunCoup" id="F4JX00">
    <property type="interactions" value="8"/>
</dbReference>
<dbReference type="STRING" id="3702.F4JX00"/>
<dbReference type="PaxDb" id="3702-AT5G41310.1"/>
<dbReference type="GeneID" id="834132"/>
<dbReference type="KEGG" id="ath:AT5G41310"/>
<dbReference type="Araport" id="AT5G41310"/>
<dbReference type="TAIR" id="AT5G41310"/>
<dbReference type="eggNOG" id="KOG0239">
    <property type="taxonomic scope" value="Eukaryota"/>
</dbReference>
<dbReference type="HOGENOM" id="CLU_001485_1_1_1"/>
<dbReference type="InParanoid" id="F4JX00"/>
<dbReference type="PRO" id="PR:F4JX00"/>
<dbReference type="Proteomes" id="UP000006548">
    <property type="component" value="Chromosome 5"/>
</dbReference>
<dbReference type="ExpressionAtlas" id="F4JX00">
    <property type="expression patterns" value="baseline and differential"/>
</dbReference>
<dbReference type="GO" id="GO:0005874">
    <property type="term" value="C:microtubule"/>
    <property type="evidence" value="ECO:0007669"/>
    <property type="project" value="UniProtKB-KW"/>
</dbReference>
<dbReference type="GO" id="GO:0015630">
    <property type="term" value="C:microtubule cytoskeleton"/>
    <property type="evidence" value="ECO:0000318"/>
    <property type="project" value="GO_Central"/>
</dbReference>
<dbReference type="GO" id="GO:0005524">
    <property type="term" value="F:ATP binding"/>
    <property type="evidence" value="ECO:0007669"/>
    <property type="project" value="UniProtKB-KW"/>
</dbReference>
<dbReference type="GO" id="GO:0008017">
    <property type="term" value="F:microtubule binding"/>
    <property type="evidence" value="ECO:0000318"/>
    <property type="project" value="GO_Central"/>
</dbReference>
<dbReference type="GO" id="GO:0003777">
    <property type="term" value="F:microtubule motor activity"/>
    <property type="evidence" value="ECO:0007669"/>
    <property type="project" value="InterPro"/>
</dbReference>
<dbReference type="GO" id="GO:0007018">
    <property type="term" value="P:microtubule-based movement"/>
    <property type="evidence" value="ECO:0007669"/>
    <property type="project" value="InterPro"/>
</dbReference>
<dbReference type="GO" id="GO:0007017">
    <property type="term" value="P:microtubule-based process"/>
    <property type="evidence" value="ECO:0000318"/>
    <property type="project" value="GO_Central"/>
</dbReference>
<dbReference type="CDD" id="cd21203">
    <property type="entry name" value="CH_AtKIN14-like"/>
    <property type="match status" value="1"/>
</dbReference>
<dbReference type="FunFam" id="3.40.850.10:FF:000210">
    <property type="entry name" value="Kinesin-like protein"/>
    <property type="match status" value="1"/>
</dbReference>
<dbReference type="FunFam" id="1.10.418.10:FF:000083">
    <property type="entry name" value="kinesin-like protein KIN-14J isoform X2"/>
    <property type="match status" value="1"/>
</dbReference>
<dbReference type="Gene3D" id="1.10.418.10">
    <property type="entry name" value="Calponin-like domain"/>
    <property type="match status" value="1"/>
</dbReference>
<dbReference type="Gene3D" id="3.40.850.10">
    <property type="entry name" value="Kinesin motor domain"/>
    <property type="match status" value="1"/>
</dbReference>
<dbReference type="InterPro" id="IPR001715">
    <property type="entry name" value="CH_dom"/>
</dbReference>
<dbReference type="InterPro" id="IPR036872">
    <property type="entry name" value="CH_dom_sf"/>
</dbReference>
<dbReference type="InterPro" id="IPR027640">
    <property type="entry name" value="Kinesin-like_fam"/>
</dbReference>
<dbReference type="InterPro" id="IPR019821">
    <property type="entry name" value="Kinesin_motor_CS"/>
</dbReference>
<dbReference type="InterPro" id="IPR001752">
    <property type="entry name" value="Kinesin_motor_dom"/>
</dbReference>
<dbReference type="InterPro" id="IPR036961">
    <property type="entry name" value="Kinesin_motor_dom_sf"/>
</dbReference>
<dbReference type="InterPro" id="IPR027417">
    <property type="entry name" value="P-loop_NTPase"/>
</dbReference>
<dbReference type="PANTHER" id="PTHR47972:SF32">
    <property type="entry name" value="KINESIN-LIKE PROTEIN KIN-14K"/>
    <property type="match status" value="1"/>
</dbReference>
<dbReference type="PANTHER" id="PTHR47972">
    <property type="entry name" value="KINESIN-LIKE PROTEIN KLP-3"/>
    <property type="match status" value="1"/>
</dbReference>
<dbReference type="Pfam" id="PF00307">
    <property type="entry name" value="CH"/>
    <property type="match status" value="1"/>
</dbReference>
<dbReference type="Pfam" id="PF00225">
    <property type="entry name" value="Kinesin"/>
    <property type="match status" value="1"/>
</dbReference>
<dbReference type="PRINTS" id="PR00380">
    <property type="entry name" value="KINESINHEAVY"/>
</dbReference>
<dbReference type="SMART" id="SM00033">
    <property type="entry name" value="CH"/>
    <property type="match status" value="1"/>
</dbReference>
<dbReference type="SMART" id="SM00129">
    <property type="entry name" value="KISc"/>
    <property type="match status" value="1"/>
</dbReference>
<dbReference type="SUPFAM" id="SSF47576">
    <property type="entry name" value="Calponin-homology domain, CH-domain"/>
    <property type="match status" value="1"/>
</dbReference>
<dbReference type="SUPFAM" id="SSF52540">
    <property type="entry name" value="P-loop containing nucleoside triphosphate hydrolases"/>
    <property type="match status" value="1"/>
</dbReference>
<dbReference type="PROSITE" id="PS50021">
    <property type="entry name" value="CH"/>
    <property type="match status" value="1"/>
</dbReference>
<dbReference type="PROSITE" id="PS00411">
    <property type="entry name" value="KINESIN_MOTOR_1"/>
    <property type="match status" value="1"/>
</dbReference>
<dbReference type="PROSITE" id="PS50067">
    <property type="entry name" value="KINESIN_MOTOR_2"/>
    <property type="match status" value="1"/>
</dbReference>
<accession>F4JX00</accession>
<accession>Q9FHD2</accession>
<sequence length="975" mass="109700">MKNRIKKGSSMIGVYGRSDGSSSIQSSNGSESRESIDDNKQGHQSLVEWLNETLPYLNLPWEASEEELRACLVDGTVLCNLLNQLSPGSMRMGGSFEPGCVNIERFLAAMDEMTLPRFEVSDLEQGDMIRVIQSLKALKASFSDDGYDKNTLSARRRWSLPADHSKGVDSNFNDGGSQFIEASEINTSHHSLQNTSTRSLFDMLDRLLDESSQKMNVSHVYVSILRGIVQVVEQRISNQAENLKNQNILFRVREEKYRSRINVLETLASGTTDENEVRRKRCAPNRKGKERSNAELSKLKQELEIVKETHEKQFLELKLNAQKAKVELERQVKNSELRVVEAKELEKLCETKTKRWEKKEQTYKRFINHQTEALQELKATSMSLKHDVLKIGENYFLDLTYYGIKLRGVAHAAKNYQIIIEENRRLYNEVQELKGNIRVYCRIRPFLQGQNKKQTSIEYTGENGELVVANPLKQGKDTYRLFKFNKVFGPESTQEEVFLDTRPMIRSILDGYNVCIFAYGQTGSGKTYTMSGPSITSEEDRGVNYRALNDLFHLTQSRQNSVMYEVGVQMVEIYNEQVRDLLSQDVPDASMHSVRSTEDVLELMNIGLMNRTVGATTLNEKSSRSHSVLSVHVRGVDVKTESVLRGSLHLVDLAGSERVGRSEVTGERLKEAQHINKSLSALGDVIFALAHKNPHVPYRNSKLTQVLQNSLGGQAKTLMFVQINPDEDSYAETVSTLKFAERVSGVELGAARSYKEGRDVRQLMEQVSNLKDMIAKKDEELQKFQNINGIQKRGLSKLRIVSPPRRHSLGGALTNSPRRRQGPGLLGRTTSDIHRHQNESRSSSKFSGGAKDNNIFEDTELLGFEESNNEERLSDISDSCLSMGTETDGSISSGAMELTLFPETSNPPEMFEQSEQNDKAHVGVGPSKPLKHTPKPDISKPSRLSISTTSSKALTSSKRPVTGISSSVKPLNRKR</sequence>
<gene>
    <name evidence="6" type="primary">KIN14K</name>
    <name evidence="7" type="ordered locus">At5g41310</name>
    <name evidence="8" type="ORF">K1O13.11</name>
</gene>